<keyword id="KW-0328">Glycosyltransferase</keyword>
<keyword id="KW-0441">Lipid A biosynthesis</keyword>
<keyword id="KW-0444">Lipid biosynthesis</keyword>
<keyword id="KW-0443">Lipid metabolism</keyword>
<keyword id="KW-1185">Reference proteome</keyword>
<keyword id="KW-0808">Transferase</keyword>
<reference key="1">
    <citation type="journal article" date="2002" name="Proc. Natl. Acad. Sci. U.S.A.">
        <title>Extensive mosaic structure revealed by the complete genome sequence of uropathogenic Escherichia coli.</title>
        <authorList>
            <person name="Welch R.A."/>
            <person name="Burland V."/>
            <person name="Plunkett G. III"/>
            <person name="Redford P."/>
            <person name="Roesch P."/>
            <person name="Rasko D."/>
            <person name="Buckles E.L."/>
            <person name="Liou S.-R."/>
            <person name="Boutin A."/>
            <person name="Hackett J."/>
            <person name="Stroud D."/>
            <person name="Mayhew G.F."/>
            <person name="Rose D.J."/>
            <person name="Zhou S."/>
            <person name="Schwartz D.C."/>
            <person name="Perna N.T."/>
            <person name="Mobley H.L.T."/>
            <person name="Donnenberg M.S."/>
            <person name="Blattner F.R."/>
        </authorList>
    </citation>
    <scope>NUCLEOTIDE SEQUENCE [LARGE SCALE GENOMIC DNA]</scope>
    <source>
        <strain>CFT073 / ATCC 700928 / UPEC</strain>
    </source>
</reference>
<comment type="function">
    <text evidence="1">Condensation of UDP-2,3-diacylglucosamine and 2,3-diacylglucosamine-1-phosphate to form lipid A disaccharide, a precursor of lipid A, a phosphorylated glycolipid that anchors the lipopolysaccharide to the outer membrane of the cell.</text>
</comment>
<comment type="catalytic activity">
    <reaction evidence="1">
        <text>2-N,3-O-bis[(3R)-3-hydroxytetradecanoyl]-alpha-D-glucosaminyl 1-phosphate + UDP-2-N,3-O-bis[(3R)-3-hydroxytetradecanoyl]-alpha-D-glucosamine = lipid A disaccharide (E. coli) + UDP + H(+)</text>
        <dbReference type="Rhea" id="RHEA:22668"/>
        <dbReference type="ChEBI" id="CHEBI:15378"/>
        <dbReference type="ChEBI" id="CHEBI:57957"/>
        <dbReference type="ChEBI" id="CHEBI:58223"/>
        <dbReference type="ChEBI" id="CHEBI:58466"/>
        <dbReference type="ChEBI" id="CHEBI:78847"/>
    </reaction>
</comment>
<comment type="catalytic activity">
    <reaction evidence="1">
        <text>a lipid X + a UDP-2-N,3-O-bis[(3R)-3-hydroxyacyl]-alpha-D-glucosamine = a lipid A disaccharide + UDP + H(+)</text>
        <dbReference type="Rhea" id="RHEA:67828"/>
        <dbReference type="ChEBI" id="CHEBI:15378"/>
        <dbReference type="ChEBI" id="CHEBI:58223"/>
        <dbReference type="ChEBI" id="CHEBI:137748"/>
        <dbReference type="ChEBI" id="CHEBI:176338"/>
        <dbReference type="ChEBI" id="CHEBI:176343"/>
        <dbReference type="EC" id="2.4.1.182"/>
    </reaction>
</comment>
<comment type="pathway">
    <text evidence="1">Glycolipid biosynthesis; lipid IV(A) biosynthesis; lipid IV(A) from (3R)-3-hydroxytetradecanoyl-[acyl-carrier-protein] and UDP-N-acetyl-alpha-D-glucosamine: step 5/6.</text>
</comment>
<comment type="similarity">
    <text evidence="1">Belongs to the LpxB family.</text>
</comment>
<sequence length="382" mass="42355">MTEQRPLTIALVAGETSGDILGAGLIRALKERVPNARFVGVAGPRMQAEGCEAWYEMEELAVMGIVEVLGRLRRLLHIRADLTKRFGELKPDVFVGIDAPDFNITLEGNLKKQGIKTIHYVSPSVWAWRQKRVFKIGRATDLVLAFLPFEKAFYDKYNVPCRFIGHTMADAMPLDPDKNGARDVLGIPYDAHCLALLPGSRGAEVEMLSADFLKTAQLLRQTYPDLEIVVPLVNAKRREQFERIKAAVAPDLSVHLLDGMGREAMVASDAALLASGTAALECMLAKCPMVVGYRMKPFTFWLAKRLVKTDYVSLPNLLAGRELVKELLQEECEPQKLAAALLPLLANGKTSHAMHDTFRELHQQIRCNADEQAAQAVLELAQ</sequence>
<proteinExistence type="inferred from homology"/>
<name>LPXB_ECOL6</name>
<feature type="chain" id="PRO_0000190165" description="Lipid-A-disaccharide synthase">
    <location>
        <begin position="1"/>
        <end position="382"/>
    </location>
</feature>
<accession>Q8FL07</accession>
<organism>
    <name type="scientific">Escherichia coli O6:H1 (strain CFT073 / ATCC 700928 / UPEC)</name>
    <dbReference type="NCBI Taxonomy" id="199310"/>
    <lineage>
        <taxon>Bacteria</taxon>
        <taxon>Pseudomonadati</taxon>
        <taxon>Pseudomonadota</taxon>
        <taxon>Gammaproteobacteria</taxon>
        <taxon>Enterobacterales</taxon>
        <taxon>Enterobacteriaceae</taxon>
        <taxon>Escherichia</taxon>
    </lineage>
</organism>
<dbReference type="EC" id="2.4.1.182" evidence="1"/>
<dbReference type="EMBL" id="AE014075">
    <property type="protein sequence ID" value="AAN78711.1"/>
    <property type="molecule type" value="Genomic_DNA"/>
</dbReference>
<dbReference type="RefSeq" id="WP_000139678.1">
    <property type="nucleotide sequence ID" value="NZ_CP051263.1"/>
</dbReference>
<dbReference type="SMR" id="Q8FL07"/>
<dbReference type="STRING" id="199310.c0219"/>
<dbReference type="CAZy" id="GT19">
    <property type="family name" value="Glycosyltransferase Family 19"/>
</dbReference>
<dbReference type="KEGG" id="ecc:c0219"/>
<dbReference type="eggNOG" id="COG0763">
    <property type="taxonomic scope" value="Bacteria"/>
</dbReference>
<dbReference type="HOGENOM" id="CLU_036577_3_0_6"/>
<dbReference type="BioCyc" id="ECOL199310:C0219-MONOMER"/>
<dbReference type="UniPathway" id="UPA00359">
    <property type="reaction ID" value="UER00481"/>
</dbReference>
<dbReference type="Proteomes" id="UP000001410">
    <property type="component" value="Chromosome"/>
</dbReference>
<dbReference type="GO" id="GO:0016020">
    <property type="term" value="C:membrane"/>
    <property type="evidence" value="ECO:0007669"/>
    <property type="project" value="GOC"/>
</dbReference>
<dbReference type="GO" id="GO:0008915">
    <property type="term" value="F:lipid-A-disaccharide synthase activity"/>
    <property type="evidence" value="ECO:0007669"/>
    <property type="project" value="UniProtKB-UniRule"/>
</dbReference>
<dbReference type="GO" id="GO:0005543">
    <property type="term" value="F:phospholipid binding"/>
    <property type="evidence" value="ECO:0007669"/>
    <property type="project" value="TreeGrafter"/>
</dbReference>
<dbReference type="GO" id="GO:0009245">
    <property type="term" value="P:lipid A biosynthetic process"/>
    <property type="evidence" value="ECO:0007669"/>
    <property type="project" value="UniProtKB-UniRule"/>
</dbReference>
<dbReference type="CDD" id="cd01635">
    <property type="entry name" value="Glycosyltransferase_GTB-type"/>
    <property type="match status" value="1"/>
</dbReference>
<dbReference type="HAMAP" id="MF_00392">
    <property type="entry name" value="LpxB"/>
    <property type="match status" value="1"/>
</dbReference>
<dbReference type="InterPro" id="IPR003835">
    <property type="entry name" value="Glyco_trans_19"/>
</dbReference>
<dbReference type="NCBIfam" id="TIGR00215">
    <property type="entry name" value="lpxB"/>
    <property type="match status" value="1"/>
</dbReference>
<dbReference type="PANTHER" id="PTHR30372">
    <property type="entry name" value="LIPID-A-DISACCHARIDE SYNTHASE"/>
    <property type="match status" value="1"/>
</dbReference>
<dbReference type="PANTHER" id="PTHR30372:SF4">
    <property type="entry name" value="LIPID-A-DISACCHARIDE SYNTHASE, MITOCHONDRIAL-RELATED"/>
    <property type="match status" value="1"/>
</dbReference>
<dbReference type="Pfam" id="PF02684">
    <property type="entry name" value="LpxB"/>
    <property type="match status" value="1"/>
</dbReference>
<dbReference type="SUPFAM" id="SSF53756">
    <property type="entry name" value="UDP-Glycosyltransferase/glycogen phosphorylase"/>
    <property type="match status" value="1"/>
</dbReference>
<gene>
    <name evidence="1" type="primary">lpxB</name>
    <name type="ordered locus">c0219</name>
</gene>
<evidence type="ECO:0000255" key="1">
    <source>
        <dbReference type="HAMAP-Rule" id="MF_00392"/>
    </source>
</evidence>
<protein>
    <recommendedName>
        <fullName evidence="1">Lipid-A-disaccharide synthase</fullName>
        <ecNumber evidence="1">2.4.1.182</ecNumber>
    </recommendedName>
</protein>